<dbReference type="EC" id="1.8.4.8" evidence="1"/>
<dbReference type="EMBL" id="AP009240">
    <property type="protein sequence ID" value="BAG78542.1"/>
    <property type="molecule type" value="Genomic_DNA"/>
</dbReference>
<dbReference type="RefSeq" id="WP_000039843.1">
    <property type="nucleotide sequence ID" value="NC_011415.1"/>
</dbReference>
<dbReference type="SMR" id="B6I6F6"/>
<dbReference type="GeneID" id="75205594"/>
<dbReference type="KEGG" id="ecy:ECSE_3018"/>
<dbReference type="HOGENOM" id="CLU_044089_3_0_6"/>
<dbReference type="UniPathway" id="UPA00140">
    <property type="reaction ID" value="UER00206"/>
</dbReference>
<dbReference type="Proteomes" id="UP000008199">
    <property type="component" value="Chromosome"/>
</dbReference>
<dbReference type="GO" id="GO:0005737">
    <property type="term" value="C:cytoplasm"/>
    <property type="evidence" value="ECO:0007669"/>
    <property type="project" value="UniProtKB-SubCell"/>
</dbReference>
<dbReference type="GO" id="GO:0004604">
    <property type="term" value="F:phosphoadenylyl-sulfate reductase (thioredoxin) activity"/>
    <property type="evidence" value="ECO:0007669"/>
    <property type="project" value="UniProtKB-UniRule"/>
</dbReference>
<dbReference type="GO" id="GO:0070814">
    <property type="term" value="P:hydrogen sulfide biosynthetic process"/>
    <property type="evidence" value="ECO:0007669"/>
    <property type="project" value="UniProtKB-UniRule"/>
</dbReference>
<dbReference type="GO" id="GO:0019379">
    <property type="term" value="P:sulfate assimilation, phosphoadenylyl sulfate reduction by phosphoadenylyl-sulfate reductase (thioredoxin)"/>
    <property type="evidence" value="ECO:0007669"/>
    <property type="project" value="UniProtKB-UniRule"/>
</dbReference>
<dbReference type="CDD" id="cd23945">
    <property type="entry name" value="PAPS_reductase"/>
    <property type="match status" value="1"/>
</dbReference>
<dbReference type="FunFam" id="3.40.50.620:FF:000043">
    <property type="entry name" value="Phosphoadenosine phosphosulfate reductase"/>
    <property type="match status" value="1"/>
</dbReference>
<dbReference type="Gene3D" id="3.40.50.620">
    <property type="entry name" value="HUPs"/>
    <property type="match status" value="1"/>
</dbReference>
<dbReference type="HAMAP" id="MF_00063">
    <property type="entry name" value="CysH"/>
    <property type="match status" value="1"/>
</dbReference>
<dbReference type="InterPro" id="IPR004511">
    <property type="entry name" value="PAPS/APS_Rdtase"/>
</dbReference>
<dbReference type="InterPro" id="IPR002500">
    <property type="entry name" value="PAPS_reduct_dom"/>
</dbReference>
<dbReference type="InterPro" id="IPR011800">
    <property type="entry name" value="PAPS_reductase_CysH"/>
</dbReference>
<dbReference type="InterPro" id="IPR014729">
    <property type="entry name" value="Rossmann-like_a/b/a_fold"/>
</dbReference>
<dbReference type="NCBIfam" id="TIGR00434">
    <property type="entry name" value="cysH"/>
    <property type="match status" value="1"/>
</dbReference>
<dbReference type="NCBIfam" id="TIGR02057">
    <property type="entry name" value="PAPS_reductase"/>
    <property type="match status" value="1"/>
</dbReference>
<dbReference type="NCBIfam" id="NF002537">
    <property type="entry name" value="PRK02090.1"/>
    <property type="match status" value="1"/>
</dbReference>
<dbReference type="PANTHER" id="PTHR46509">
    <property type="entry name" value="PHOSPHOADENOSINE PHOSPHOSULFATE REDUCTASE"/>
    <property type="match status" value="1"/>
</dbReference>
<dbReference type="PANTHER" id="PTHR46509:SF1">
    <property type="entry name" value="PHOSPHOADENOSINE PHOSPHOSULFATE REDUCTASE"/>
    <property type="match status" value="1"/>
</dbReference>
<dbReference type="Pfam" id="PF01507">
    <property type="entry name" value="PAPS_reduct"/>
    <property type="match status" value="1"/>
</dbReference>
<dbReference type="PIRSF" id="PIRSF000857">
    <property type="entry name" value="PAPS_reductase"/>
    <property type="match status" value="1"/>
</dbReference>
<dbReference type="SUPFAM" id="SSF52402">
    <property type="entry name" value="Adenine nucleotide alpha hydrolases-like"/>
    <property type="match status" value="1"/>
</dbReference>
<sequence length="244" mass="27973">MSKLDLNALNELPKVDRILALAETNAELEKLDAEGRVAWALDNLPGEYVLSSSFGIQAAVSLHLVNQIHPDIPVILTDTGYLFPETYRFIDELTDKLKLNLKVYRATESAAWQEARYGKLWEQGVEGIEKYNDINKVEPMNRALKELNAQTWFAGLRREQSGSRANLPVLAIQRGVFKVLPIIDWDNRTIYQYLQKHGLKYHPLWDEGYLSVGDTHTTRKWEPGMSEEETRFFGLKRECGLHEG</sequence>
<gene>
    <name evidence="1" type="primary">cysH</name>
    <name type="ordered locus">ECSE_3018</name>
</gene>
<proteinExistence type="inferred from homology"/>
<evidence type="ECO:0000255" key="1">
    <source>
        <dbReference type="HAMAP-Rule" id="MF_00063"/>
    </source>
</evidence>
<comment type="function">
    <text evidence="1">Catalyzes the formation of sulfite from phosphoadenosine 5'-phosphosulfate (PAPS) using thioredoxin as an electron donor.</text>
</comment>
<comment type="catalytic activity">
    <reaction evidence="1">
        <text>[thioredoxin]-disulfide + sulfite + adenosine 3',5'-bisphosphate + 2 H(+) = [thioredoxin]-dithiol + 3'-phosphoadenylyl sulfate</text>
        <dbReference type="Rhea" id="RHEA:11724"/>
        <dbReference type="Rhea" id="RHEA-COMP:10698"/>
        <dbReference type="Rhea" id="RHEA-COMP:10700"/>
        <dbReference type="ChEBI" id="CHEBI:15378"/>
        <dbReference type="ChEBI" id="CHEBI:17359"/>
        <dbReference type="ChEBI" id="CHEBI:29950"/>
        <dbReference type="ChEBI" id="CHEBI:50058"/>
        <dbReference type="ChEBI" id="CHEBI:58339"/>
        <dbReference type="ChEBI" id="CHEBI:58343"/>
        <dbReference type="EC" id="1.8.4.8"/>
    </reaction>
</comment>
<comment type="pathway">
    <text evidence="1">Sulfur metabolism; hydrogen sulfide biosynthesis; sulfite from sulfate: step 3/3.</text>
</comment>
<comment type="subcellular location">
    <subcellularLocation>
        <location evidence="1">Cytoplasm</location>
    </subcellularLocation>
</comment>
<comment type="similarity">
    <text evidence="1">Belongs to the PAPS reductase family. CysH subfamily.</text>
</comment>
<feature type="chain" id="PRO_1000092173" description="Phosphoadenosine 5'-phosphosulfate reductase">
    <location>
        <begin position="1"/>
        <end position="244"/>
    </location>
</feature>
<feature type="active site" description="Nucleophile; cysteine thiosulfonate intermediate" evidence="1">
    <location>
        <position position="239"/>
    </location>
</feature>
<accession>B6I6F6</accession>
<reference key="1">
    <citation type="journal article" date="2008" name="DNA Res.">
        <title>Complete genome sequence and comparative analysis of the wild-type commensal Escherichia coli strain SE11 isolated from a healthy adult.</title>
        <authorList>
            <person name="Oshima K."/>
            <person name="Toh H."/>
            <person name="Ogura Y."/>
            <person name="Sasamoto H."/>
            <person name="Morita H."/>
            <person name="Park S.-H."/>
            <person name="Ooka T."/>
            <person name="Iyoda S."/>
            <person name="Taylor T.D."/>
            <person name="Hayashi T."/>
            <person name="Itoh K."/>
            <person name="Hattori M."/>
        </authorList>
    </citation>
    <scope>NUCLEOTIDE SEQUENCE [LARGE SCALE GENOMIC DNA]</scope>
    <source>
        <strain>SE11</strain>
    </source>
</reference>
<keyword id="KW-0963">Cytoplasm</keyword>
<keyword id="KW-0560">Oxidoreductase</keyword>
<protein>
    <recommendedName>
        <fullName evidence="1">Phosphoadenosine 5'-phosphosulfate reductase</fullName>
        <shortName evidence="1">PAPS reductase</shortName>
        <ecNumber evidence="1">1.8.4.8</ecNumber>
    </recommendedName>
    <alternativeName>
        <fullName evidence="1">3'-phosphoadenylylsulfate reductase</fullName>
    </alternativeName>
    <alternativeName>
        <fullName evidence="1">PAPS reductase, thioredoxin dependent</fullName>
    </alternativeName>
    <alternativeName>
        <fullName evidence="1">PAPS sulfotransferase</fullName>
    </alternativeName>
    <alternativeName>
        <fullName evidence="1">PAdoPS reductase</fullName>
    </alternativeName>
</protein>
<name>CYSH_ECOSE</name>
<organism>
    <name type="scientific">Escherichia coli (strain SE11)</name>
    <dbReference type="NCBI Taxonomy" id="409438"/>
    <lineage>
        <taxon>Bacteria</taxon>
        <taxon>Pseudomonadati</taxon>
        <taxon>Pseudomonadota</taxon>
        <taxon>Gammaproteobacteria</taxon>
        <taxon>Enterobacterales</taxon>
        <taxon>Enterobacteriaceae</taxon>
        <taxon>Escherichia</taxon>
    </lineage>
</organism>